<evidence type="ECO:0000250" key="1"/>
<evidence type="ECO:0000250" key="2">
    <source>
        <dbReference type="UniProtKB" id="P32245"/>
    </source>
</evidence>
<evidence type="ECO:0000250" key="3">
    <source>
        <dbReference type="UniProtKB" id="P56450"/>
    </source>
</evidence>
<evidence type="ECO:0000255" key="4"/>
<evidence type="ECO:0000255" key="5">
    <source>
        <dbReference type="PROSITE-ProRule" id="PRU00521"/>
    </source>
</evidence>
<evidence type="ECO:0000269" key="6">
    <source>
    </source>
</evidence>
<comment type="function">
    <text evidence="2 3">Hormone receptor that acts as a key component of the leptin-melanocortin pathway at the intersection of homeostatic maintenance of energetic state. Plays a role in regulating food intake: activation by a stimulating hormone such as anorexigenic alpha-melanocyte stimulating hormone (alpha-MSH) inhibits appetite, whereas binding to a natural antagonist like Agouti-related protein/AGRP promotes appetite. G-protein-coupled receptor that activates conventional Galphas signaling leading to induction of anorexogenic signaling in the hypothalamus to result in negative energy balance (By similarity). Regulates the firing activity of neurons from the hypothalamus by alpha-MSH and AGRP independently of Galphas signaling by ligand-induced coupling of closure of inwardly rectifying potassium channel KCNJ13 (By similarity). In intestinal epithelial cells, plays a role in the inhibition of hepatic glucose production via nesfatin-1/NUCB2 leading to increased cyclic adenosine monophosphate (cAMP) levels and glucagon-like peptide 1 (GLP-1) secretion in the intestinal epithelium (By similarity).</text>
</comment>
<comment type="subunit">
    <text evidence="1 2">Homodimer; disulfide-linked, also forms higher order oligomers. Interacts with GNAS (By similarity). Interacts with ATRNL1 (By similarity). Interacts with MGRN1; this interaction competes with GNAS-binding and thus inhibits agonist-induced cAMP production. Interacts with MRAP and MRAP2; these associated factors increase ligand-sensitivity and generation of cAMP (By similarity).</text>
</comment>
<comment type="subcellular location">
    <subcellularLocation>
        <location evidence="2">Cell membrane</location>
        <topology evidence="4">Multi-pass membrane protein</topology>
    </subcellularLocation>
</comment>
<comment type="similarity">
    <text evidence="5">Belongs to the G-protein coupled receptor 1 family.</text>
</comment>
<proteinExistence type="evidence at transcript level"/>
<keyword id="KW-0106">Calcium</keyword>
<keyword id="KW-1003">Cell membrane</keyword>
<keyword id="KW-1015">Disulfide bond</keyword>
<keyword id="KW-0297">G-protein coupled receptor</keyword>
<keyword id="KW-0325">Glycoprotein</keyword>
<keyword id="KW-0449">Lipoprotein</keyword>
<keyword id="KW-0472">Membrane</keyword>
<keyword id="KW-0479">Metal-binding</keyword>
<keyword id="KW-0564">Palmitate</keyword>
<keyword id="KW-0675">Receptor</keyword>
<keyword id="KW-1185">Reference proteome</keyword>
<keyword id="KW-0807">Transducer</keyword>
<keyword id="KW-0812">Transmembrane</keyword>
<keyword id="KW-1133">Transmembrane helix</keyword>
<name>MC4R_PIG</name>
<gene>
    <name type="primary">MC4R</name>
</gene>
<reference key="1">
    <citation type="submission" date="1998-12" db="EMBL/GenBank/DDBJ databases">
        <authorList>
            <person name="Ito Y."/>
            <person name="Minezawa M."/>
        </authorList>
    </citation>
    <scope>NUCLEOTIDE SEQUENCE [MRNA]</scope>
    <source>
        <strain>Large white X Duroc</strain>
        <tissue>Kidney</tissue>
    </source>
</reference>
<reference key="2">
    <citation type="submission" date="2006-02" db="EMBL/GenBank/DDBJ databases">
        <title>The comparative analysis on MC4R gene of wild boar, domestic pig and their crossbred.</title>
        <authorList>
            <person name="Yang X.Q."/>
            <person name="Yu H."/>
            <person name="Liu D."/>
        </authorList>
    </citation>
    <scope>NUCLEOTIDE SEQUENCE [MRNA]</scope>
</reference>
<reference key="3">
    <citation type="journal article" date="2000" name="Mamm. Genome">
        <title>A missense variant of the porcine melanocortin-4 receptor (MC4R) gene is associated with fatness, growth, and feed intake traits.</title>
        <authorList>
            <person name="Kim K.S."/>
            <person name="Larsen N."/>
            <person name="Short T."/>
            <person name="Plastow G."/>
            <person name="Rothschild M.F."/>
        </authorList>
    </citation>
    <scope>NUCLEOTIDE SEQUENCE [GENOMIC DNA] OF 73-320</scope>
    <scope>VARIANT ASN-298</scope>
</reference>
<reference key="4">
    <citation type="submission" date="2000-01" db="EMBL/GenBank/DDBJ databases">
        <authorList>
            <person name="Matteri R.L."/>
            <person name="Dyer C.J."/>
        </authorList>
    </citation>
    <scope>NUCLEOTIDE SEQUENCE [MRNA] OF 75-142</scope>
    <source>
        <tissue>Hypothalamus</tissue>
    </source>
</reference>
<feature type="chain" id="PRO_0000069725" description="Melanocortin receptor 4">
    <location>
        <begin position="1"/>
        <end position="332"/>
    </location>
</feature>
<feature type="topological domain" description="Extracellular" evidence="4">
    <location>
        <begin position="1"/>
        <end position="43"/>
    </location>
</feature>
<feature type="transmembrane region" description="Helical; Name=1" evidence="4">
    <location>
        <begin position="44"/>
        <end position="69"/>
    </location>
</feature>
<feature type="topological domain" description="Cytoplasmic" evidence="4">
    <location>
        <begin position="70"/>
        <end position="81"/>
    </location>
</feature>
<feature type="transmembrane region" description="Helical; Name=2" evidence="4">
    <location>
        <begin position="82"/>
        <end position="106"/>
    </location>
</feature>
<feature type="topological domain" description="Extracellular" evidence="4">
    <location>
        <begin position="107"/>
        <end position="123"/>
    </location>
</feature>
<feature type="transmembrane region" description="Helical; Name=3" evidence="4">
    <location>
        <begin position="124"/>
        <end position="145"/>
    </location>
</feature>
<feature type="topological domain" description="Cytoplasmic" evidence="4">
    <location>
        <begin position="146"/>
        <end position="165"/>
    </location>
</feature>
<feature type="transmembrane region" description="Helical; Name=4" evidence="4">
    <location>
        <begin position="166"/>
        <end position="186"/>
    </location>
</feature>
<feature type="topological domain" description="Extracellular" evidence="4">
    <location>
        <begin position="187"/>
        <end position="191"/>
    </location>
</feature>
<feature type="transmembrane region" description="Helical; Name=5" evidence="4">
    <location>
        <begin position="192"/>
        <end position="215"/>
    </location>
</feature>
<feature type="topological domain" description="Cytoplasmic" evidence="4">
    <location>
        <begin position="216"/>
        <end position="248"/>
    </location>
</feature>
<feature type="transmembrane region" description="Helical; Name=6" evidence="4">
    <location>
        <begin position="249"/>
        <end position="271"/>
    </location>
</feature>
<feature type="topological domain" description="Extracellular" evidence="4">
    <location>
        <begin position="272"/>
        <end position="280"/>
    </location>
</feature>
<feature type="transmembrane region" description="Helical; Name=7" evidence="4">
    <location>
        <begin position="281"/>
        <end position="304"/>
    </location>
</feature>
<feature type="topological domain" description="Cytoplasmic" evidence="4">
    <location>
        <begin position="305"/>
        <end position="332"/>
    </location>
</feature>
<feature type="binding site" evidence="2">
    <location>
        <position position="100"/>
    </location>
    <ligand>
        <name>Ca(2+)</name>
        <dbReference type="ChEBI" id="CHEBI:29108"/>
    </ligand>
</feature>
<feature type="binding site" evidence="2">
    <location>
        <position position="122"/>
    </location>
    <ligand>
        <name>Ca(2+)</name>
        <dbReference type="ChEBI" id="CHEBI:29108"/>
    </ligand>
</feature>
<feature type="binding site" evidence="2">
    <location>
        <position position="126"/>
    </location>
    <ligand>
        <name>Ca(2+)</name>
        <dbReference type="ChEBI" id="CHEBI:29108"/>
    </ligand>
</feature>
<feature type="lipid moiety-binding region" description="S-palmitoyl cysteine" evidence="4">
    <location>
        <position position="318"/>
    </location>
</feature>
<feature type="glycosylation site" description="N-linked (GlcNAc...) asparagine" evidence="4">
    <location>
        <position position="2"/>
    </location>
</feature>
<feature type="glycosylation site" description="N-linked (GlcNAc...) asparagine" evidence="4">
    <location>
        <position position="17"/>
    </location>
</feature>
<feature type="glycosylation site" description="N-linked (GlcNAc...) asparagine" evidence="4">
    <location>
        <position position="26"/>
    </location>
</feature>
<feature type="disulfide bond" evidence="2">
    <location>
        <begin position="40"/>
        <end position="279"/>
    </location>
</feature>
<feature type="disulfide bond" description="Interchain" evidence="5">
    <location>
        <position position="84"/>
    </location>
</feature>
<feature type="disulfide bond" evidence="2">
    <location>
        <begin position="271"/>
        <end position="277"/>
    </location>
</feature>
<feature type="sequence variant" description="Associated with less backfat thickness, slower growth rate and lower feed intake." evidence="6">
    <original>D</original>
    <variation>N</variation>
    <location>
        <position position="298"/>
    </location>
</feature>
<sequence length="332" mass="36947">MNSTHHHGMHTSLHFWNRSTYGLHSNASEPLGKGYSEGGCYEQLFVSPEVFVTLGVISLLENILVIVAIAKNKNLHSPMYFFICSLAVADMLVSVSNGSETIVITLLNSTDTDAQSFTVNIDNVIDSVICSSLLASICSLLSIAVDRYFTIFYALQYHNIMTVKRVGIIISCIWAVCTVSGVLFIIYSDSSAVIICLITVFFTMLALMASLYVHMFLMARLHIKRIAVLPGTGTIRQGANMKGAITLTILIGVFVVCWAPFFLHLIFYISCPQNPYCVCFMSHFNLYLILIMCNSIIDPLIYALRSQELRKTFKEIICCYPLGGLCDLSSRY</sequence>
<organism>
    <name type="scientific">Sus scrofa</name>
    <name type="common">Pig</name>
    <dbReference type="NCBI Taxonomy" id="9823"/>
    <lineage>
        <taxon>Eukaryota</taxon>
        <taxon>Metazoa</taxon>
        <taxon>Chordata</taxon>
        <taxon>Craniata</taxon>
        <taxon>Vertebrata</taxon>
        <taxon>Euteleostomi</taxon>
        <taxon>Mammalia</taxon>
        <taxon>Eutheria</taxon>
        <taxon>Laurasiatheria</taxon>
        <taxon>Artiodactyla</taxon>
        <taxon>Suina</taxon>
        <taxon>Suidae</taxon>
        <taxon>Sus</taxon>
    </lineage>
</organism>
<protein>
    <recommendedName>
        <fullName>Melanocortin receptor 4</fullName>
        <shortName>MC4-R</shortName>
    </recommendedName>
</protein>
<dbReference type="EMBL" id="AB021664">
    <property type="protein sequence ID" value="BAA36170.1"/>
    <property type="molecule type" value="mRNA"/>
</dbReference>
<dbReference type="EMBL" id="DQ388767">
    <property type="protein sequence ID" value="ABD28176.1"/>
    <property type="molecule type" value="mRNA"/>
</dbReference>
<dbReference type="EMBL" id="AF087937">
    <property type="protein sequence ID" value="AAF31753.1"/>
    <property type="molecule type" value="Genomic_DNA"/>
</dbReference>
<dbReference type="EMBL" id="AF227727">
    <property type="protein sequence ID" value="AAF34778.1"/>
    <property type="molecule type" value="mRNA"/>
</dbReference>
<dbReference type="RefSeq" id="NP_999338.1">
    <property type="nucleotide sequence ID" value="NM_214173.1"/>
</dbReference>
<dbReference type="SMR" id="O97504"/>
<dbReference type="FunCoup" id="O97504">
    <property type="interactions" value="44"/>
</dbReference>
<dbReference type="GlyCosmos" id="O97504">
    <property type="glycosylation" value="3 sites, No reported glycans"/>
</dbReference>
<dbReference type="GlyGen" id="O97504">
    <property type="glycosylation" value="3 sites"/>
</dbReference>
<dbReference type="PaxDb" id="9823-ENSSSCP00000005275"/>
<dbReference type="Ensembl" id="ENSSSCT00000091644.1">
    <property type="protein sequence ID" value="ENSSSCP00000074588.1"/>
    <property type="gene ID" value="ENSSSCG00000051798.1"/>
</dbReference>
<dbReference type="Ensembl" id="ENSSSCT00090052365">
    <property type="protein sequence ID" value="ENSSSCP00090032662"/>
    <property type="gene ID" value="ENSSSCG00090029546"/>
</dbReference>
<dbReference type="Ensembl" id="ENSSSCT00110012981">
    <property type="protein sequence ID" value="ENSSSCP00110009145"/>
    <property type="gene ID" value="ENSSSCG00110006626"/>
</dbReference>
<dbReference type="Ensembl" id="ENSSSCT00115013578">
    <property type="protein sequence ID" value="ENSSSCP00115012832"/>
    <property type="gene ID" value="ENSSSCG00115007780"/>
</dbReference>
<dbReference type="GeneID" id="397359"/>
<dbReference type="KEGG" id="ssc:397359"/>
<dbReference type="CTD" id="4160"/>
<dbReference type="VGNC" id="VGNC:103125">
    <property type="gene designation" value="MC4R"/>
</dbReference>
<dbReference type="eggNOG" id="KOG3656">
    <property type="taxonomic scope" value="Eukaryota"/>
</dbReference>
<dbReference type="GeneTree" id="ENSGT01120000271819"/>
<dbReference type="InParanoid" id="O97504"/>
<dbReference type="OMA" id="FYISCPH"/>
<dbReference type="OrthoDB" id="5970330at2759"/>
<dbReference type="Reactome" id="R-SSC-375276">
    <property type="pathway name" value="Peptide ligand-binding receptors"/>
</dbReference>
<dbReference type="Reactome" id="R-SSC-418555">
    <property type="pathway name" value="G alpha (s) signalling events"/>
</dbReference>
<dbReference type="Proteomes" id="UP000008227">
    <property type="component" value="Chromosome 1"/>
</dbReference>
<dbReference type="Proteomes" id="UP000314985">
    <property type="component" value="Unplaced"/>
</dbReference>
<dbReference type="Proteomes" id="UP000694570">
    <property type="component" value="Unplaced"/>
</dbReference>
<dbReference type="Proteomes" id="UP000694571">
    <property type="component" value="Unplaced"/>
</dbReference>
<dbReference type="Proteomes" id="UP000694720">
    <property type="component" value="Unplaced"/>
</dbReference>
<dbReference type="Proteomes" id="UP000694722">
    <property type="component" value="Unplaced"/>
</dbReference>
<dbReference type="Proteomes" id="UP000694723">
    <property type="component" value="Unplaced"/>
</dbReference>
<dbReference type="Proteomes" id="UP000694724">
    <property type="component" value="Unplaced"/>
</dbReference>
<dbReference type="Proteomes" id="UP000694725">
    <property type="component" value="Unplaced"/>
</dbReference>
<dbReference type="Proteomes" id="UP000694726">
    <property type="component" value="Unplaced"/>
</dbReference>
<dbReference type="Proteomes" id="UP000694727">
    <property type="component" value="Unplaced"/>
</dbReference>
<dbReference type="Proteomes" id="UP000694728">
    <property type="component" value="Unplaced"/>
</dbReference>
<dbReference type="Bgee" id="ENSSSCG00000051798">
    <property type="expression patterns" value="Expressed in cerebellum and 9 other cell types or tissues"/>
</dbReference>
<dbReference type="GO" id="GO:0005737">
    <property type="term" value="C:cytoplasm"/>
    <property type="evidence" value="ECO:0000318"/>
    <property type="project" value="GO_Central"/>
</dbReference>
<dbReference type="GO" id="GO:0005886">
    <property type="term" value="C:plasma membrane"/>
    <property type="evidence" value="ECO:0000318"/>
    <property type="project" value="GO_Central"/>
</dbReference>
<dbReference type="GO" id="GO:0004980">
    <property type="term" value="F:melanocyte-stimulating hormone receptor activity"/>
    <property type="evidence" value="ECO:0000318"/>
    <property type="project" value="GO_Central"/>
</dbReference>
<dbReference type="GO" id="GO:0042923">
    <property type="term" value="F:neuropeptide binding"/>
    <property type="evidence" value="ECO:0007669"/>
    <property type="project" value="Ensembl"/>
</dbReference>
<dbReference type="GO" id="GO:0031625">
    <property type="term" value="F:ubiquitin protein ligase binding"/>
    <property type="evidence" value="ECO:0007669"/>
    <property type="project" value="Ensembl"/>
</dbReference>
<dbReference type="GO" id="GO:0007189">
    <property type="term" value="P:adenylate cyclase-activating G protein-coupled receptor signaling pathway"/>
    <property type="evidence" value="ECO:0000318"/>
    <property type="project" value="GO_Central"/>
</dbReference>
<dbReference type="GO" id="GO:0007631">
    <property type="term" value="P:feeding behavior"/>
    <property type="evidence" value="ECO:0007669"/>
    <property type="project" value="Ensembl"/>
</dbReference>
<dbReference type="GO" id="GO:0030073">
    <property type="term" value="P:insulin secretion"/>
    <property type="evidence" value="ECO:0007669"/>
    <property type="project" value="Ensembl"/>
</dbReference>
<dbReference type="GO" id="GO:0045780">
    <property type="term" value="P:positive regulation of bone resorption"/>
    <property type="evidence" value="ECO:0007669"/>
    <property type="project" value="Ensembl"/>
</dbReference>
<dbReference type="GO" id="GO:1903998">
    <property type="term" value="P:regulation of eating behavior"/>
    <property type="evidence" value="ECO:0007669"/>
    <property type="project" value="Ensembl"/>
</dbReference>
<dbReference type="GO" id="GO:0019222">
    <property type="term" value="P:regulation of metabolic process"/>
    <property type="evidence" value="ECO:0000318"/>
    <property type="project" value="GO_Central"/>
</dbReference>
<dbReference type="GO" id="GO:0032094">
    <property type="term" value="P:response to food"/>
    <property type="evidence" value="ECO:0007669"/>
    <property type="project" value="Ensembl"/>
</dbReference>
<dbReference type="GO" id="GO:0032868">
    <property type="term" value="P:response to insulin"/>
    <property type="evidence" value="ECO:0007669"/>
    <property type="project" value="Ensembl"/>
</dbReference>
<dbReference type="GO" id="GO:1990680">
    <property type="term" value="P:response to melanocyte-stimulating hormone"/>
    <property type="evidence" value="ECO:0007669"/>
    <property type="project" value="Ensembl"/>
</dbReference>
<dbReference type="CDD" id="cd15353">
    <property type="entry name" value="7tmA_MC4R"/>
    <property type="match status" value="1"/>
</dbReference>
<dbReference type="FunFam" id="1.20.1070.10:FF:000077">
    <property type="entry name" value="Melanocortin receptor 4"/>
    <property type="match status" value="1"/>
</dbReference>
<dbReference type="Gene3D" id="1.20.1070.10">
    <property type="entry name" value="Rhodopsin 7-helix transmembrane proteins"/>
    <property type="match status" value="1"/>
</dbReference>
<dbReference type="InterPro" id="IPR000276">
    <property type="entry name" value="GPCR_Rhodpsn"/>
</dbReference>
<dbReference type="InterPro" id="IPR017452">
    <property type="entry name" value="GPCR_Rhodpsn_7TM"/>
</dbReference>
<dbReference type="InterPro" id="IPR001908">
    <property type="entry name" value="MC3-5R"/>
</dbReference>
<dbReference type="InterPro" id="IPR000155">
    <property type="entry name" value="Mcort_rcpt_4"/>
</dbReference>
<dbReference type="InterPro" id="IPR001671">
    <property type="entry name" value="Melcrt_ACTH_rcpt"/>
</dbReference>
<dbReference type="PANTHER" id="PTHR22750">
    <property type="entry name" value="G-PROTEIN COUPLED RECEPTOR"/>
    <property type="match status" value="1"/>
</dbReference>
<dbReference type="Pfam" id="PF00001">
    <property type="entry name" value="7tm_1"/>
    <property type="match status" value="1"/>
</dbReference>
<dbReference type="PRINTS" id="PR00237">
    <property type="entry name" value="GPCRRHODOPSN"/>
</dbReference>
<dbReference type="PRINTS" id="PR00534">
    <property type="entry name" value="MCRFAMILY"/>
</dbReference>
<dbReference type="PRINTS" id="PR00535">
    <property type="entry name" value="MELNOCORTINR"/>
</dbReference>
<dbReference type="PRINTS" id="PR01062">
    <property type="entry name" value="MELNOCORTN4R"/>
</dbReference>
<dbReference type="SMART" id="SM01381">
    <property type="entry name" value="7TM_GPCR_Srsx"/>
    <property type="match status" value="1"/>
</dbReference>
<dbReference type="SUPFAM" id="SSF81321">
    <property type="entry name" value="Family A G protein-coupled receptor-like"/>
    <property type="match status" value="1"/>
</dbReference>
<dbReference type="PROSITE" id="PS00237">
    <property type="entry name" value="G_PROTEIN_RECEP_F1_1"/>
    <property type="match status" value="1"/>
</dbReference>
<dbReference type="PROSITE" id="PS50262">
    <property type="entry name" value="G_PROTEIN_RECEP_F1_2"/>
    <property type="match status" value="1"/>
</dbReference>
<accession>O97504</accession>
<accession>Q2EF33</accession>
<accession>Q9N141</accession>
<accession>Q9N274</accession>